<comment type="function">
    <text evidence="1">Protease-inhibitor that contains multiple distinct protease inhibitor domains. Probably has serine protease- and metalloprotease-inhibitor activity. Inhibits the biological activity of mature myostatin, but not activin (By similarity).</text>
</comment>
<comment type="subunit">
    <text evidence="8">Interacts with both mature and propeptide myostatin/MSTN.</text>
</comment>
<comment type="subcellular location">
    <subcellularLocation>
        <location evidence="1">Secreted</location>
    </subcellularLocation>
</comment>
<comment type="tissue specificity">
    <text evidence="7">Primarily expressed in ovary, testis and brain, but not in liver. In fetal tissues, it is primarily expressed in brain, skeletal muscle, thymus and kidney.</text>
</comment>
<comment type="similarity">
    <text evidence="10">Belongs to the WFIKKN family.</text>
</comment>
<feature type="signal peptide" evidence="1">
    <location>
        <begin position="1"/>
        <end position="34"/>
    </location>
</feature>
<feature type="chain" id="PRO_0000307820" description="WAP, Kazal, immunoglobulin, Kunitz and NTR domain-containing protein 2">
    <location>
        <begin position="35"/>
        <end position="576"/>
    </location>
</feature>
<feature type="domain" description="WAP" evidence="5">
    <location>
        <begin position="39"/>
        <end position="92"/>
    </location>
</feature>
<feature type="domain" description="Kazal-like" evidence="6">
    <location>
        <begin position="126"/>
        <end position="177"/>
    </location>
</feature>
<feature type="domain" description="Ig-like C2-type">
    <location>
        <begin position="210"/>
        <end position="303"/>
    </location>
</feature>
<feature type="domain" description="BPTI/Kunitz inhibitor 1" evidence="3">
    <location>
        <begin position="328"/>
        <end position="378"/>
    </location>
</feature>
<feature type="domain" description="BPTI/Kunitz inhibitor 2" evidence="3">
    <location>
        <begin position="386"/>
        <end position="436"/>
    </location>
</feature>
<feature type="domain" description="NTR" evidence="4">
    <location>
        <begin position="445"/>
        <end position="566"/>
    </location>
</feature>
<feature type="site" description="Reactive bond" evidence="6">
    <location>
        <begin position="140"/>
        <end position="141"/>
    </location>
</feature>
<feature type="glycosylation site" description="N-linked (GlcNAc...) asparagine" evidence="2">
    <location>
        <position position="319"/>
    </location>
</feature>
<feature type="glycosylation site" description="N-linked (GlcNAc...) asparagine" evidence="2">
    <location>
        <position position="519"/>
    </location>
</feature>
<feature type="disulfide bond" evidence="1">
    <location>
        <begin position="46"/>
        <end position="79"/>
    </location>
</feature>
<feature type="disulfide bond" evidence="1">
    <location>
        <begin position="62"/>
        <end position="83"/>
    </location>
</feature>
<feature type="disulfide bond" evidence="1">
    <location>
        <begin position="66"/>
        <end position="78"/>
    </location>
</feature>
<feature type="disulfide bond" evidence="1">
    <location>
        <begin position="72"/>
        <end position="88"/>
    </location>
</feature>
<feature type="disulfide bond" evidence="1">
    <location>
        <begin position="134"/>
        <end position="164"/>
    </location>
</feature>
<feature type="disulfide bond" evidence="1">
    <location>
        <begin position="138"/>
        <end position="157"/>
    </location>
</feature>
<feature type="disulfide bond" evidence="1">
    <location>
        <begin position="146"/>
        <end position="175"/>
    </location>
</feature>
<feature type="disulfide bond" evidence="1">
    <location>
        <begin position="231"/>
        <end position="287"/>
    </location>
</feature>
<feature type="disulfide bond" evidence="1">
    <location>
        <begin position="328"/>
        <end position="378"/>
    </location>
</feature>
<feature type="disulfide bond" evidence="1">
    <location>
        <begin position="337"/>
        <end position="361"/>
    </location>
</feature>
<feature type="disulfide bond" evidence="1">
    <location>
        <begin position="353"/>
        <end position="374"/>
    </location>
</feature>
<feature type="disulfide bond" evidence="1">
    <location>
        <begin position="386"/>
        <end position="436"/>
    </location>
</feature>
<feature type="disulfide bond" evidence="1">
    <location>
        <begin position="395"/>
        <end position="419"/>
    </location>
</feature>
<feature type="disulfide bond" evidence="1">
    <location>
        <begin position="411"/>
        <end position="432"/>
    </location>
</feature>
<feature type="disulfide bond" evidence="1">
    <location>
        <begin position="445"/>
        <end position="515"/>
    </location>
</feature>
<feature type="disulfide bond" evidence="1">
    <location>
        <begin position="448"/>
        <end position="517"/>
    </location>
</feature>
<feature type="disulfide bond" evidence="1">
    <location>
        <begin position="459"/>
        <end position="566"/>
    </location>
</feature>
<feature type="sequence variant" id="VAR_061984" description="In dbSNP:rs55700534." evidence="9">
    <original>R</original>
    <variation>Q</variation>
    <location>
        <position position="31"/>
    </location>
</feature>
<feature type="sequence variant" id="VAR_036692" description="In dbSNP:rs35300894.">
    <original>V</original>
    <variation>M</variation>
    <location>
        <position position="96"/>
    </location>
</feature>
<accession>Q8TEU8</accession>
<accession>Q6UXZ9</accession>
<name>WFKN2_HUMAN</name>
<organism>
    <name type="scientific">Homo sapiens</name>
    <name type="common">Human</name>
    <dbReference type="NCBI Taxonomy" id="9606"/>
    <lineage>
        <taxon>Eukaryota</taxon>
        <taxon>Metazoa</taxon>
        <taxon>Chordata</taxon>
        <taxon>Craniata</taxon>
        <taxon>Vertebrata</taxon>
        <taxon>Euteleostomi</taxon>
        <taxon>Mammalia</taxon>
        <taxon>Eutheria</taxon>
        <taxon>Euarchontoglires</taxon>
        <taxon>Primates</taxon>
        <taxon>Haplorrhini</taxon>
        <taxon>Catarrhini</taxon>
        <taxon>Hominidae</taxon>
        <taxon>Homo</taxon>
    </lineage>
</organism>
<sequence length="576" mass="63941">MWAPRCRRFWSRWEQVAALLLLLLLLGVPPRSLALPPIRYSHAGICPNDMNPNLWVDAQSTCRRECETDQECETYEKCCPNVCGTKSCVAARYMDVKGKKGPVGMPKEATCDHFMCLQQGSECDIWDGQPVCKCKDRCEKEPSFTCASDGLTYYNRCYMDAEACSKGITLAVVTCRYHFTWPNTSPPPPETTMHPTTASPETPELDMAAPALLNNPVHQSVTMGETVSFLCDVVGRPRPEITWEKQLEDRENVVMRPNHVRGNVVVTNIAQLVIYNAQLQDAGIYTCTARNVAGVLRADFPLSVVRGHQAAATSESSPNGTAFPAAECLKPPDSEDCGEEQTRWHFDAQANNCLTFTFGHCHRNLNHFETYEACMLACMSGPLAACSLPALQGPCKAYAPRWAYNSQTGQCQSFVYGGCEGNGNNFESREACEESCPFPRGNQRCRACKPRQKLVTSFCRSDFVILGRVSELTEEPDSGRALVTVDEVLKDEKMGLKFLGQEPLEVTLLHVDWACPCPNVTVSEMPLIIMGEVDGGMAMLRPDSFVGASSARRVRKLREVMHKKTCDVLKEFLGLH</sequence>
<reference key="1">
    <citation type="journal article" date="2002" name="Biol. Chem.">
        <title>Distinct expression pattern of two related human proteins containing multiple types of protease-inhibitory modules.</title>
        <authorList>
            <person name="Trexler M."/>
            <person name="Banyai L."/>
            <person name="Patthy L."/>
        </authorList>
    </citation>
    <scope>NUCLEOTIDE SEQUENCE [MRNA]</scope>
    <scope>TISSUE SPECIFICITY</scope>
</reference>
<reference key="2">
    <citation type="journal article" date="2003" name="Genome Res.">
        <title>The secreted protein discovery initiative (SPDI), a large-scale effort to identify novel human secreted and transmembrane proteins: a bioinformatics assessment.</title>
        <authorList>
            <person name="Clark H.F."/>
            <person name="Gurney A.L."/>
            <person name="Abaya E."/>
            <person name="Baker K."/>
            <person name="Baldwin D.T."/>
            <person name="Brush J."/>
            <person name="Chen J."/>
            <person name="Chow B."/>
            <person name="Chui C."/>
            <person name="Crowley C."/>
            <person name="Currell B."/>
            <person name="Deuel B."/>
            <person name="Dowd P."/>
            <person name="Eaton D."/>
            <person name="Foster J.S."/>
            <person name="Grimaldi C."/>
            <person name="Gu Q."/>
            <person name="Hass P.E."/>
            <person name="Heldens S."/>
            <person name="Huang A."/>
            <person name="Kim H.S."/>
            <person name="Klimowski L."/>
            <person name="Jin Y."/>
            <person name="Johnson S."/>
            <person name="Lee J."/>
            <person name="Lewis L."/>
            <person name="Liao D."/>
            <person name="Mark M.R."/>
            <person name="Robbie E."/>
            <person name="Sanchez C."/>
            <person name="Schoenfeld J."/>
            <person name="Seshagiri S."/>
            <person name="Simmons L."/>
            <person name="Singh J."/>
            <person name="Smith V."/>
            <person name="Stinson J."/>
            <person name="Vagts A."/>
            <person name="Vandlen R.L."/>
            <person name="Watanabe C."/>
            <person name="Wieand D."/>
            <person name="Woods K."/>
            <person name="Xie M.-H."/>
            <person name="Yansura D.G."/>
            <person name="Yi S."/>
            <person name="Yu G."/>
            <person name="Yuan J."/>
            <person name="Zhang M."/>
            <person name="Zhang Z."/>
            <person name="Goddard A.D."/>
            <person name="Wood W.I."/>
            <person name="Godowski P.J."/>
            <person name="Gray A.M."/>
        </authorList>
    </citation>
    <scope>NUCLEOTIDE SEQUENCE [LARGE SCALE MRNA]</scope>
    <scope>VARIANT GLN-31</scope>
</reference>
<reference key="3">
    <citation type="journal article" date="2003" name="Mol. Endocrinol.">
        <title>Regulation of myostatin in vivo by growth and differentiation factor-associated serum protein-1: a novel protein with protease inhibitor and follistatin domains.</title>
        <authorList>
            <person name="Hill J.J."/>
            <person name="Qiu Y."/>
            <person name="Hewick R.M."/>
            <person name="Wolfman N.M."/>
        </authorList>
    </citation>
    <scope>IDENTIFICATION BY MASS SPECTROMETRY</scope>
    <scope>INTERACTION WITH MSTN</scope>
</reference>
<keyword id="KW-1015">Disulfide bond</keyword>
<keyword id="KW-0325">Glycoprotein</keyword>
<keyword id="KW-0393">Immunoglobulin domain</keyword>
<keyword id="KW-0481">Metalloenzyme inhibitor</keyword>
<keyword id="KW-0483">Metalloprotease inhibitor</keyword>
<keyword id="KW-0646">Protease inhibitor</keyword>
<keyword id="KW-1267">Proteomics identification</keyword>
<keyword id="KW-1185">Reference proteome</keyword>
<keyword id="KW-0677">Repeat</keyword>
<keyword id="KW-0964">Secreted</keyword>
<keyword id="KW-0722">Serine protease inhibitor</keyword>
<keyword id="KW-0732">Signal</keyword>
<evidence type="ECO:0000250" key="1"/>
<evidence type="ECO:0000255" key="2"/>
<evidence type="ECO:0000255" key="3">
    <source>
        <dbReference type="PROSITE-ProRule" id="PRU00031"/>
    </source>
</evidence>
<evidence type="ECO:0000255" key="4">
    <source>
        <dbReference type="PROSITE-ProRule" id="PRU00295"/>
    </source>
</evidence>
<evidence type="ECO:0000255" key="5">
    <source>
        <dbReference type="PROSITE-ProRule" id="PRU00722"/>
    </source>
</evidence>
<evidence type="ECO:0000255" key="6">
    <source>
        <dbReference type="PROSITE-ProRule" id="PRU00798"/>
    </source>
</evidence>
<evidence type="ECO:0000269" key="7">
    <source>
    </source>
</evidence>
<evidence type="ECO:0000269" key="8">
    <source>
    </source>
</evidence>
<evidence type="ECO:0000269" key="9">
    <source>
    </source>
</evidence>
<evidence type="ECO:0000305" key="10"/>
<proteinExistence type="evidence at protein level"/>
<protein>
    <recommendedName>
        <fullName>WAP, Kazal, immunoglobulin, Kunitz and NTR domain-containing protein 2</fullName>
    </recommendedName>
    <alternativeName>
        <fullName>Growth and differentiation factor-associated serum protein 1</fullName>
        <shortName>GASP-1</shortName>
        <shortName>hGASP-1</shortName>
    </alternativeName>
    <alternativeName>
        <fullName>WAP, follistatin, immunoglobulin, Kunitz and NTR domain-containing-related protein</fullName>
    </alternativeName>
    <alternativeName>
        <fullName>WFIKKN-related protein</fullName>
    </alternativeName>
</protein>
<dbReference type="EMBL" id="AF468657">
    <property type="protein sequence ID" value="AAL77058.1"/>
    <property type="molecule type" value="mRNA"/>
</dbReference>
<dbReference type="EMBL" id="AY358142">
    <property type="protein sequence ID" value="AAQ88509.1"/>
    <property type="molecule type" value="mRNA"/>
</dbReference>
<dbReference type="CCDS" id="CCDS11575.1"/>
<dbReference type="RefSeq" id="NP_001317270.1">
    <property type="nucleotide sequence ID" value="NM_001330341.1"/>
</dbReference>
<dbReference type="RefSeq" id="NP_783165.1">
    <property type="nucleotide sequence ID" value="NM_175575.6"/>
</dbReference>
<dbReference type="SMR" id="Q8TEU8"/>
<dbReference type="FunCoup" id="Q8TEU8">
    <property type="interactions" value="206"/>
</dbReference>
<dbReference type="IntAct" id="Q8TEU8">
    <property type="interactions" value="8"/>
</dbReference>
<dbReference type="MINT" id="Q8TEU8"/>
<dbReference type="STRING" id="9606.ENSP00000311184"/>
<dbReference type="MEROPS" id="I02.954"/>
<dbReference type="MEROPS" id="I02.955"/>
<dbReference type="MEROPS" id="I17.952"/>
<dbReference type="GlyCosmos" id="Q8TEU8">
    <property type="glycosylation" value="2 sites, No reported glycans"/>
</dbReference>
<dbReference type="GlyGen" id="Q8TEU8">
    <property type="glycosylation" value="2 sites"/>
</dbReference>
<dbReference type="iPTMnet" id="Q8TEU8"/>
<dbReference type="PhosphoSitePlus" id="Q8TEU8"/>
<dbReference type="BioMuta" id="WFIKKN2"/>
<dbReference type="DMDM" id="74716081"/>
<dbReference type="MassIVE" id="Q8TEU8"/>
<dbReference type="PaxDb" id="9606-ENSP00000311184"/>
<dbReference type="PeptideAtlas" id="Q8TEU8"/>
<dbReference type="ProteomicsDB" id="74502"/>
<dbReference type="Antibodypedia" id="2618">
    <property type="antibodies" value="125 antibodies from 18 providers"/>
</dbReference>
<dbReference type="DNASU" id="124857"/>
<dbReference type="Ensembl" id="ENST00000311378.5">
    <property type="protein sequence ID" value="ENSP00000311184.4"/>
    <property type="gene ID" value="ENSG00000173714.8"/>
</dbReference>
<dbReference type="GeneID" id="124857"/>
<dbReference type="KEGG" id="hsa:124857"/>
<dbReference type="MANE-Select" id="ENST00000311378.5">
    <property type="protein sequence ID" value="ENSP00000311184.4"/>
    <property type="RefSeq nucleotide sequence ID" value="NM_175575.6"/>
    <property type="RefSeq protein sequence ID" value="NP_783165.1"/>
</dbReference>
<dbReference type="UCSC" id="uc002isv.5">
    <property type="organism name" value="human"/>
</dbReference>
<dbReference type="AGR" id="HGNC:30916"/>
<dbReference type="CTD" id="124857"/>
<dbReference type="DisGeNET" id="124857"/>
<dbReference type="GeneCards" id="WFIKKN2"/>
<dbReference type="HGNC" id="HGNC:30916">
    <property type="gene designation" value="WFIKKN2"/>
</dbReference>
<dbReference type="HPA" id="ENSG00000173714">
    <property type="expression patterns" value="Tissue enriched (choroid)"/>
</dbReference>
<dbReference type="MIM" id="610895">
    <property type="type" value="gene"/>
</dbReference>
<dbReference type="neXtProt" id="NX_Q8TEU8"/>
<dbReference type="OpenTargets" id="ENSG00000173714"/>
<dbReference type="PharmGKB" id="PA134864812"/>
<dbReference type="VEuPathDB" id="HostDB:ENSG00000173714"/>
<dbReference type="eggNOG" id="KOG4597">
    <property type="taxonomic scope" value="Eukaryota"/>
</dbReference>
<dbReference type="GeneTree" id="ENSGT00940000160624"/>
<dbReference type="InParanoid" id="Q8TEU8"/>
<dbReference type="OMA" id="LFTRWMW"/>
<dbReference type="OrthoDB" id="8187079at2759"/>
<dbReference type="PAN-GO" id="Q8TEU8">
    <property type="GO annotations" value="4 GO annotations based on evolutionary models"/>
</dbReference>
<dbReference type="PhylomeDB" id="Q8TEU8"/>
<dbReference type="TreeFam" id="TF315349"/>
<dbReference type="PathwayCommons" id="Q8TEU8"/>
<dbReference type="SignaLink" id="Q8TEU8"/>
<dbReference type="BioGRID-ORCS" id="124857">
    <property type="hits" value="12 hits in 1143 CRISPR screens"/>
</dbReference>
<dbReference type="GenomeRNAi" id="124857"/>
<dbReference type="Pharos" id="Q8TEU8">
    <property type="development level" value="Tbio"/>
</dbReference>
<dbReference type="PRO" id="PR:Q8TEU8"/>
<dbReference type="Proteomes" id="UP000005640">
    <property type="component" value="Chromosome 17"/>
</dbReference>
<dbReference type="RNAct" id="Q8TEU8">
    <property type="molecule type" value="protein"/>
</dbReference>
<dbReference type="Bgee" id="ENSG00000173714">
    <property type="expression patterns" value="Expressed in left ovary and 95 other cell types or tissues"/>
</dbReference>
<dbReference type="ExpressionAtlas" id="Q8TEU8">
    <property type="expression patterns" value="baseline and differential"/>
</dbReference>
<dbReference type="GO" id="GO:0005615">
    <property type="term" value="C:extracellular space"/>
    <property type="evidence" value="ECO:0000314"/>
    <property type="project" value="UniProtKB"/>
</dbReference>
<dbReference type="GO" id="GO:0048019">
    <property type="term" value="F:receptor antagonist activity"/>
    <property type="evidence" value="ECO:0000314"/>
    <property type="project" value="UniProtKB"/>
</dbReference>
<dbReference type="GO" id="GO:0004867">
    <property type="term" value="F:serine-type endopeptidase inhibitor activity"/>
    <property type="evidence" value="ECO:0007669"/>
    <property type="project" value="UniProtKB-KW"/>
</dbReference>
<dbReference type="GO" id="GO:0050431">
    <property type="term" value="F:transforming growth factor beta binding"/>
    <property type="evidence" value="ECO:0000314"/>
    <property type="project" value="UniProtKB"/>
</dbReference>
<dbReference type="GO" id="GO:0055001">
    <property type="term" value="P:muscle cell development"/>
    <property type="evidence" value="ECO:0007669"/>
    <property type="project" value="Ensembl"/>
</dbReference>
<dbReference type="GO" id="GO:0030512">
    <property type="term" value="P:negative regulation of transforming growth factor beta receptor signaling pathway"/>
    <property type="evidence" value="ECO:0000314"/>
    <property type="project" value="UniProtKB"/>
</dbReference>
<dbReference type="GO" id="GO:0060021">
    <property type="term" value="P:roof of mouth development"/>
    <property type="evidence" value="ECO:0007669"/>
    <property type="project" value="Ensembl"/>
</dbReference>
<dbReference type="GO" id="GO:0001501">
    <property type="term" value="P:skeletal system development"/>
    <property type="evidence" value="ECO:0007669"/>
    <property type="project" value="Ensembl"/>
</dbReference>
<dbReference type="GO" id="GO:0007179">
    <property type="term" value="P:transforming growth factor beta receptor signaling pathway"/>
    <property type="evidence" value="ECO:0000250"/>
    <property type="project" value="UniProtKB"/>
</dbReference>
<dbReference type="CDD" id="cd05765">
    <property type="entry name" value="IgI_3_WFIKKN-like"/>
    <property type="match status" value="1"/>
</dbReference>
<dbReference type="CDD" id="cd00104">
    <property type="entry name" value="KAZAL_FS"/>
    <property type="match status" value="1"/>
</dbReference>
<dbReference type="CDD" id="cd22605">
    <property type="entry name" value="Kunitz_WFIKKN_1-like"/>
    <property type="match status" value="1"/>
</dbReference>
<dbReference type="CDD" id="cd22606">
    <property type="entry name" value="Kunitz_WFIKKN_2-like"/>
    <property type="match status" value="1"/>
</dbReference>
<dbReference type="CDD" id="cd03575">
    <property type="entry name" value="NTR_WFIKKN"/>
    <property type="match status" value="1"/>
</dbReference>
<dbReference type="FunFam" id="4.10.410.10:FF:000002">
    <property type="entry name" value="WAP, follistatin/kazal, immunoglobulin, kunitz and netrin domain-containing 2"/>
    <property type="match status" value="1"/>
</dbReference>
<dbReference type="FunFam" id="2.40.50.120:FF:000004">
    <property type="entry name" value="WAP, Kazal, immunoglobulin, Kunitz and NTR domain-containing protein 2"/>
    <property type="match status" value="1"/>
</dbReference>
<dbReference type="FunFam" id="2.60.40.10:FF:000473">
    <property type="entry name" value="WAP, Kazal, immunoglobulin, Kunitz and NTR domain-containing protein 2"/>
    <property type="match status" value="1"/>
</dbReference>
<dbReference type="FunFam" id="3.30.60.30:FF:000014">
    <property type="entry name" value="WAP, Kazal, immunoglobulin, Kunitz and NTR domain-containing protein 2"/>
    <property type="match status" value="1"/>
</dbReference>
<dbReference type="FunFam" id="4.10.410.10:FF:000009">
    <property type="entry name" value="WAP, Kazal, immunoglobulin, Kunitz and NTR domain-containing protein 2"/>
    <property type="match status" value="1"/>
</dbReference>
<dbReference type="FunFam" id="4.10.75.10:FF:000002">
    <property type="entry name" value="WAP, Kazal, immunoglobulin, Kunitz and NTR domain-containing protein 2"/>
    <property type="match status" value="1"/>
</dbReference>
<dbReference type="Gene3D" id="2.40.50.120">
    <property type="match status" value="1"/>
</dbReference>
<dbReference type="Gene3D" id="3.30.60.30">
    <property type="match status" value="1"/>
</dbReference>
<dbReference type="Gene3D" id="4.10.75.10">
    <property type="entry name" value="Elafin-like"/>
    <property type="match status" value="1"/>
</dbReference>
<dbReference type="Gene3D" id="2.60.40.10">
    <property type="entry name" value="Immunoglobulins"/>
    <property type="match status" value="1"/>
</dbReference>
<dbReference type="Gene3D" id="4.10.410.10">
    <property type="entry name" value="Pancreatic trypsin inhibitor Kunitz domain"/>
    <property type="match status" value="2"/>
</dbReference>
<dbReference type="InterPro" id="IPR036645">
    <property type="entry name" value="Elafin-like_sf"/>
</dbReference>
<dbReference type="InterPro" id="IPR007110">
    <property type="entry name" value="Ig-like_dom"/>
</dbReference>
<dbReference type="InterPro" id="IPR036179">
    <property type="entry name" value="Ig-like_dom_sf"/>
</dbReference>
<dbReference type="InterPro" id="IPR013783">
    <property type="entry name" value="Ig-like_fold"/>
</dbReference>
<dbReference type="InterPro" id="IPR013098">
    <property type="entry name" value="Ig_I-set"/>
</dbReference>
<dbReference type="InterPro" id="IPR003599">
    <property type="entry name" value="Ig_sub"/>
</dbReference>
<dbReference type="InterPro" id="IPR003598">
    <property type="entry name" value="Ig_sub2"/>
</dbReference>
<dbReference type="InterPro" id="IPR002350">
    <property type="entry name" value="Kazal_dom"/>
</dbReference>
<dbReference type="InterPro" id="IPR036058">
    <property type="entry name" value="Kazal_dom_sf"/>
</dbReference>
<dbReference type="InterPro" id="IPR002223">
    <property type="entry name" value="Kunitz_BPTI"/>
</dbReference>
<dbReference type="InterPro" id="IPR036880">
    <property type="entry name" value="Kunitz_BPTI_sf"/>
</dbReference>
<dbReference type="InterPro" id="IPR001134">
    <property type="entry name" value="Netrin_domain"/>
</dbReference>
<dbReference type="InterPro" id="IPR018933">
    <property type="entry name" value="Netrin_module_non-TIMP"/>
</dbReference>
<dbReference type="InterPro" id="IPR020901">
    <property type="entry name" value="Prtase_inh_Kunz-CS"/>
</dbReference>
<dbReference type="InterPro" id="IPR008993">
    <property type="entry name" value="TIMP-like_OB-fold"/>
</dbReference>
<dbReference type="InterPro" id="IPR008197">
    <property type="entry name" value="WAP_dom"/>
</dbReference>
<dbReference type="InterPro" id="IPR033638">
    <property type="entry name" value="WFIKKN1/2_Ig-like_3"/>
</dbReference>
<dbReference type="PANTHER" id="PTHR45938">
    <property type="entry name" value="ACP24A4-RELATED"/>
    <property type="match status" value="1"/>
</dbReference>
<dbReference type="PANTHER" id="PTHR45938:SF7">
    <property type="entry name" value="WAP, KAZAL, IMMUNOGLOBULIN, KUNITZ AND NTR DOMAIN-CONTAINING PROTEIN 2"/>
    <property type="match status" value="1"/>
</dbReference>
<dbReference type="Pfam" id="PF07679">
    <property type="entry name" value="I-set"/>
    <property type="match status" value="1"/>
</dbReference>
<dbReference type="Pfam" id="PF00014">
    <property type="entry name" value="Kunitz_BPTI"/>
    <property type="match status" value="2"/>
</dbReference>
<dbReference type="Pfam" id="PF01759">
    <property type="entry name" value="NTR"/>
    <property type="match status" value="1"/>
</dbReference>
<dbReference type="Pfam" id="PF00095">
    <property type="entry name" value="WAP"/>
    <property type="match status" value="1"/>
</dbReference>
<dbReference type="PRINTS" id="PR00759">
    <property type="entry name" value="BASICPTASE"/>
</dbReference>
<dbReference type="SMART" id="SM00409">
    <property type="entry name" value="IG"/>
    <property type="match status" value="1"/>
</dbReference>
<dbReference type="SMART" id="SM00408">
    <property type="entry name" value="IGc2"/>
    <property type="match status" value="1"/>
</dbReference>
<dbReference type="SMART" id="SM00131">
    <property type="entry name" value="KU"/>
    <property type="match status" value="2"/>
</dbReference>
<dbReference type="SMART" id="SM00217">
    <property type="entry name" value="WAP"/>
    <property type="match status" value="1"/>
</dbReference>
<dbReference type="SUPFAM" id="SSF57362">
    <property type="entry name" value="BPTI-like"/>
    <property type="match status" value="2"/>
</dbReference>
<dbReference type="SUPFAM" id="SSF57256">
    <property type="entry name" value="Elafin-like"/>
    <property type="match status" value="1"/>
</dbReference>
<dbReference type="SUPFAM" id="SSF48726">
    <property type="entry name" value="Immunoglobulin"/>
    <property type="match status" value="1"/>
</dbReference>
<dbReference type="SUPFAM" id="SSF100895">
    <property type="entry name" value="Kazal-type serine protease inhibitors"/>
    <property type="match status" value="1"/>
</dbReference>
<dbReference type="SUPFAM" id="SSF50242">
    <property type="entry name" value="TIMP-like"/>
    <property type="match status" value="1"/>
</dbReference>
<dbReference type="PROSITE" id="PS00280">
    <property type="entry name" value="BPTI_KUNITZ_1"/>
    <property type="match status" value="1"/>
</dbReference>
<dbReference type="PROSITE" id="PS50279">
    <property type="entry name" value="BPTI_KUNITZ_2"/>
    <property type="match status" value="2"/>
</dbReference>
<dbReference type="PROSITE" id="PS50835">
    <property type="entry name" value="IG_LIKE"/>
    <property type="match status" value="1"/>
</dbReference>
<dbReference type="PROSITE" id="PS51465">
    <property type="entry name" value="KAZAL_2"/>
    <property type="match status" value="1"/>
</dbReference>
<dbReference type="PROSITE" id="PS50189">
    <property type="entry name" value="NTR"/>
    <property type="match status" value="1"/>
</dbReference>
<dbReference type="PROSITE" id="PS51390">
    <property type="entry name" value="WAP"/>
    <property type="match status" value="1"/>
</dbReference>
<gene>
    <name type="primary">WFIKKN2</name>
    <name type="synonym">GASP1</name>
    <name type="synonym">WFIKKNRP</name>
    <name type="ORF">UNQ9235/PRO31996</name>
</gene>